<organism>
    <name type="scientific">Arabidopsis thaliana</name>
    <name type="common">Mouse-ear cress</name>
    <dbReference type="NCBI Taxonomy" id="3702"/>
    <lineage>
        <taxon>Eukaryota</taxon>
        <taxon>Viridiplantae</taxon>
        <taxon>Streptophyta</taxon>
        <taxon>Embryophyta</taxon>
        <taxon>Tracheophyta</taxon>
        <taxon>Spermatophyta</taxon>
        <taxon>Magnoliopsida</taxon>
        <taxon>eudicotyledons</taxon>
        <taxon>Gunneridae</taxon>
        <taxon>Pentapetalae</taxon>
        <taxon>rosids</taxon>
        <taxon>malvids</taxon>
        <taxon>Brassicales</taxon>
        <taxon>Brassicaceae</taxon>
        <taxon>Camelineae</taxon>
        <taxon>Arabidopsis</taxon>
    </lineage>
</organism>
<protein>
    <recommendedName>
        <fullName evidence="17">Plasmodesmata-located protein 5</fullName>
        <shortName evidence="15">PD-located protein 5</shortName>
    </recommendedName>
    <alternativeName>
        <fullName>Cysteine-rich repeat protein HWI1</fullName>
    </alternativeName>
    <alternativeName>
        <fullName evidence="13">Cysteine-rich repeat secretory protein 2</fullName>
    </alternativeName>
    <alternativeName>
        <fullName evidence="17">Plasmodesmata localizing protein 5</fullName>
    </alternativeName>
    <alternativeName>
        <fullName evidence="14 16">Protein HOPW1-1-INDUCED 1</fullName>
    </alternativeName>
</protein>
<reference key="1">
    <citation type="journal article" date="2008" name="Plant J.">
        <title>Arabidopsis proteins important for modulating defense responses to Pseudomonas syringae that secrete HopW1-1.</title>
        <authorList>
            <person name="Lee M.W."/>
            <person name="Jelenska J."/>
            <person name="Greenberg J.T."/>
        </authorList>
    </citation>
    <scope>NUCLEOTIDE SEQUENCE [MRNA]</scope>
    <scope>INDUCTION BY PATHOGEN INFECTION</scope>
</reference>
<reference key="2">
    <citation type="journal article" date="2000" name="Nature">
        <title>Sequence and analysis of chromosome 1 of the plant Arabidopsis thaliana.</title>
        <authorList>
            <person name="Theologis A."/>
            <person name="Ecker J.R."/>
            <person name="Palm C.J."/>
            <person name="Federspiel N.A."/>
            <person name="Kaul S."/>
            <person name="White O."/>
            <person name="Alonso J."/>
            <person name="Altafi H."/>
            <person name="Araujo R."/>
            <person name="Bowman C.L."/>
            <person name="Brooks S.Y."/>
            <person name="Buehler E."/>
            <person name="Chan A."/>
            <person name="Chao Q."/>
            <person name="Chen H."/>
            <person name="Cheuk R.F."/>
            <person name="Chin C.W."/>
            <person name="Chung M.K."/>
            <person name="Conn L."/>
            <person name="Conway A.B."/>
            <person name="Conway A.R."/>
            <person name="Creasy T.H."/>
            <person name="Dewar K."/>
            <person name="Dunn P."/>
            <person name="Etgu P."/>
            <person name="Feldblyum T.V."/>
            <person name="Feng J.-D."/>
            <person name="Fong B."/>
            <person name="Fujii C.Y."/>
            <person name="Gill J.E."/>
            <person name="Goldsmith A.D."/>
            <person name="Haas B."/>
            <person name="Hansen N.F."/>
            <person name="Hughes B."/>
            <person name="Huizar L."/>
            <person name="Hunter J.L."/>
            <person name="Jenkins J."/>
            <person name="Johnson-Hopson C."/>
            <person name="Khan S."/>
            <person name="Khaykin E."/>
            <person name="Kim C.J."/>
            <person name="Koo H.L."/>
            <person name="Kremenetskaia I."/>
            <person name="Kurtz D.B."/>
            <person name="Kwan A."/>
            <person name="Lam B."/>
            <person name="Langin-Hooper S."/>
            <person name="Lee A."/>
            <person name="Lee J.M."/>
            <person name="Lenz C.A."/>
            <person name="Li J.H."/>
            <person name="Li Y.-P."/>
            <person name="Lin X."/>
            <person name="Liu S.X."/>
            <person name="Liu Z.A."/>
            <person name="Luros J.S."/>
            <person name="Maiti R."/>
            <person name="Marziali A."/>
            <person name="Militscher J."/>
            <person name="Miranda M."/>
            <person name="Nguyen M."/>
            <person name="Nierman W.C."/>
            <person name="Osborne B.I."/>
            <person name="Pai G."/>
            <person name="Peterson J."/>
            <person name="Pham P.K."/>
            <person name="Rizzo M."/>
            <person name="Rooney T."/>
            <person name="Rowley D."/>
            <person name="Sakano H."/>
            <person name="Salzberg S.L."/>
            <person name="Schwartz J.R."/>
            <person name="Shinn P."/>
            <person name="Southwick A.M."/>
            <person name="Sun H."/>
            <person name="Tallon L.J."/>
            <person name="Tambunga G."/>
            <person name="Toriumi M.J."/>
            <person name="Town C.D."/>
            <person name="Utterback T."/>
            <person name="Van Aken S."/>
            <person name="Vaysberg M."/>
            <person name="Vysotskaia V.S."/>
            <person name="Walker M."/>
            <person name="Wu D."/>
            <person name="Yu G."/>
            <person name="Fraser C.M."/>
            <person name="Venter J.C."/>
            <person name="Davis R.W."/>
        </authorList>
    </citation>
    <scope>NUCLEOTIDE SEQUENCE [LARGE SCALE GENOMIC DNA]</scope>
    <source>
        <strain>cv. Columbia</strain>
    </source>
</reference>
<reference key="3">
    <citation type="journal article" date="2017" name="Plant J.">
        <title>Araport11: a complete reannotation of the Arabidopsis thaliana reference genome.</title>
        <authorList>
            <person name="Cheng C.Y."/>
            <person name="Krishnakumar V."/>
            <person name="Chan A.P."/>
            <person name="Thibaud-Nissen F."/>
            <person name="Schobel S."/>
            <person name="Town C.D."/>
        </authorList>
    </citation>
    <scope>GENOME REANNOTATION</scope>
    <source>
        <strain>cv. Columbia</strain>
    </source>
</reference>
<reference key="4">
    <citation type="journal article" date="2003" name="Science">
        <title>Empirical analysis of transcriptional activity in the Arabidopsis genome.</title>
        <authorList>
            <person name="Yamada K."/>
            <person name="Lim J."/>
            <person name="Dale J.M."/>
            <person name="Chen H."/>
            <person name="Shinn P."/>
            <person name="Palm C.J."/>
            <person name="Southwick A.M."/>
            <person name="Wu H.C."/>
            <person name="Kim C.J."/>
            <person name="Nguyen M."/>
            <person name="Pham P.K."/>
            <person name="Cheuk R.F."/>
            <person name="Karlin-Newmann G."/>
            <person name="Liu S.X."/>
            <person name="Lam B."/>
            <person name="Sakano H."/>
            <person name="Wu T."/>
            <person name="Yu G."/>
            <person name="Miranda M."/>
            <person name="Quach H.L."/>
            <person name="Tripp M."/>
            <person name="Chang C.H."/>
            <person name="Lee J.M."/>
            <person name="Toriumi M.J."/>
            <person name="Chan M.M."/>
            <person name="Tang C.C."/>
            <person name="Onodera C.S."/>
            <person name="Deng J.M."/>
            <person name="Akiyama K."/>
            <person name="Ansari Y."/>
            <person name="Arakawa T."/>
            <person name="Banh J."/>
            <person name="Banno F."/>
            <person name="Bowser L."/>
            <person name="Brooks S.Y."/>
            <person name="Carninci P."/>
            <person name="Chao Q."/>
            <person name="Choy N."/>
            <person name="Enju A."/>
            <person name="Goldsmith A.D."/>
            <person name="Gurjal M."/>
            <person name="Hansen N.F."/>
            <person name="Hayashizaki Y."/>
            <person name="Johnson-Hopson C."/>
            <person name="Hsuan V.W."/>
            <person name="Iida K."/>
            <person name="Karnes M."/>
            <person name="Khan S."/>
            <person name="Koesema E."/>
            <person name="Ishida J."/>
            <person name="Jiang P.X."/>
            <person name="Jones T."/>
            <person name="Kawai J."/>
            <person name="Kamiya A."/>
            <person name="Meyers C."/>
            <person name="Nakajima M."/>
            <person name="Narusaka M."/>
            <person name="Seki M."/>
            <person name="Sakurai T."/>
            <person name="Satou M."/>
            <person name="Tamse R."/>
            <person name="Vaysberg M."/>
            <person name="Wallender E.K."/>
            <person name="Wong C."/>
            <person name="Yamamura Y."/>
            <person name="Yuan S."/>
            <person name="Shinozaki K."/>
            <person name="Davis R.W."/>
            <person name="Theologis A."/>
            <person name="Ecker J.R."/>
        </authorList>
    </citation>
    <scope>NUCLEOTIDE SEQUENCE [LARGE SCALE MRNA]</scope>
    <source>
        <strain>cv. Columbia</strain>
    </source>
</reference>
<reference key="5">
    <citation type="submission" date="2002-03" db="EMBL/GenBank/DDBJ databases">
        <title>Full-length cDNA from Arabidopsis thaliana.</title>
        <authorList>
            <person name="Brover V.V."/>
            <person name="Troukhan M.E."/>
            <person name="Alexandrov N.A."/>
            <person name="Lu Y.-P."/>
            <person name="Flavell R.B."/>
            <person name="Feldmann K.A."/>
        </authorList>
    </citation>
    <scope>NUCLEOTIDE SEQUENCE [LARGE SCALE MRNA]</scope>
</reference>
<reference key="6">
    <citation type="journal article" date="2001" name="Plant Physiol.">
        <title>A superfamily of proteins with novel cysteine-rich repeats.</title>
        <authorList>
            <person name="Chen Z."/>
        </authorList>
    </citation>
    <scope>GENE FAMILY ORGANIZATION</scope>
    <scope>NOMENCLATURE</scope>
    <scope>CAUTION</scope>
</reference>
<reference key="7">
    <citation type="journal article" date="2006" name="Plant Cell">
        <title>Salicylic acid-independent ENHANCED DISEASE SUSCEPTIBILITY1 signaling in Arabidopsis immunity and cell death is regulated by the monooxygenase FMO1 and the Nudix hydrolase NUDT7.</title>
        <authorList>
            <person name="Bartsch M."/>
            <person name="Gobbato E."/>
            <person name="Bednarek P."/>
            <person name="Debey S."/>
            <person name="Schultze J.L."/>
            <person name="Bautor J."/>
            <person name="Parker J.E."/>
        </authorList>
    </citation>
    <scope>INDUCTION BY PATHOGEN INFECTION</scope>
</reference>
<reference key="8">
    <citation type="journal article" date="2008" name="Plant Signal. Behav.">
        <title>Symplastic domains in the Arabidopsis shoot apical meristem correlate with PDLP1 expression patterns.</title>
        <authorList>
            <person name="Bayer E."/>
            <person name="Thomas C."/>
            <person name="Maule A."/>
        </authorList>
    </citation>
    <scope>TISSUE SPECIFICITY</scope>
</reference>
<reference key="9">
    <citation type="journal article" date="2008" name="PLoS Biol.">
        <title>Specific targeting of a plasmodesmal protein affecting cell-to-cell communication.</title>
        <authorList>
            <person name="Thomas C.L."/>
            <person name="Bayer E.M."/>
            <person name="Ritzenthaler C."/>
            <person name="Fernandez-Calvino L."/>
            <person name="Maule A.J."/>
        </authorList>
    </citation>
    <scope>SUBCELLULAR LOCATION</scope>
</reference>
<reference key="10">
    <citation type="journal article" date="2010" name="PLoS Pathog.">
        <title>A family of plasmodesmal proteins with receptor-like properties for plant viral movement proteins.</title>
        <authorList>
            <person name="Amari K."/>
            <person name="Boutant E."/>
            <person name="Hofmann C."/>
            <person name="Schmitt-Keichinger C."/>
            <person name="Fernandez-Calvino L."/>
            <person name="Didier P."/>
            <person name="Lerich A."/>
            <person name="Mutterer J."/>
            <person name="Thomas C.L."/>
            <person name="Heinlein M."/>
            <person name="Mely Y."/>
            <person name="Maule A.J."/>
            <person name="Ritzenthaler C."/>
        </authorList>
    </citation>
    <scope>SUBCELLULAR LOCATION</scope>
    <scope>INTERACTION WITH GRAPEVINE FANLEAF VIRUS 2B-MP PROTEIN</scope>
    <source>
        <strain>cv. Columbia</strain>
    </source>
</reference>
<reference key="11">
    <citation type="journal article" date="2011" name="Plant Cell">
        <title>A plasmodesmata-localized protein mediates crosstalk between cell-to-cell communication and innate immunity in Arabidopsis.</title>
        <authorList>
            <person name="Lee J.Y."/>
            <person name="Wang X."/>
            <person name="Cui W."/>
            <person name="Sager R."/>
            <person name="Modla S."/>
            <person name="Czymmek K."/>
            <person name="Zybaliov B."/>
            <person name="van Wijk K."/>
            <person name="Zhang C."/>
            <person name="Lu H."/>
            <person name="Lakshmanan V."/>
        </authorList>
    </citation>
    <scope>FUNCTION</scope>
    <scope>SUBCELLULAR LOCATION</scope>
    <scope>INDUCTION BY SALICYLIC ACID</scope>
    <scope>TISSUE SPECIFICITY</scope>
    <scope>DISRUPTION PHENOTYPE</scope>
    <source>
        <strain>cv. Columbia</strain>
    </source>
</reference>
<reference key="12">
    <citation type="journal article" date="2013" name="Plant Cell">
        <title>Salicylic acid regulates Plasmodesmata closure during innate immune responses in Arabidopsis.</title>
        <authorList>
            <person name="Wang X."/>
            <person name="Sager R."/>
            <person name="Cui W."/>
            <person name="Zhang C."/>
            <person name="Lu H."/>
            <person name="Lee J.Y."/>
        </authorList>
    </citation>
    <scope>FUNCTION</scope>
    <scope>INDUCTION BY SALICYLIC ACID</scope>
    <scope>DISRUPTION PHENOTYPE</scope>
    <source>
        <strain>cv. Columbia</strain>
    </source>
</reference>
<reference key="13">
    <citation type="journal article" date="2016" name="Cell Host Microbe">
        <title>Plasmodesmata localizing proteins regulate transport and signaling during systemic acquired immunity in plants.</title>
        <authorList>
            <person name="Lim G.H."/>
            <person name="Shine M.B."/>
            <person name="de Lorenzo L."/>
            <person name="Yu K."/>
            <person name="Cui W."/>
            <person name="Navarre D."/>
            <person name="Hunt A.G."/>
            <person name="Lee J.Y."/>
            <person name="Kachroo A."/>
            <person name="Kachroo P."/>
        </authorList>
    </citation>
    <scope>FUNCTION</scope>
    <scope>SUBCELLULAR LOCATION</scope>
    <scope>INTERACTION WITH PDLP1</scope>
    <scope>DISRUPTION PHENOTYPE</scope>
</reference>
<reference key="14">
    <citation type="journal article" date="2017" name="Acta Crystallogr. F Struct. Biol. Commun.">
        <title>Ectodomain of plasmodesmata-localized protein 5 in Arabidopsis: expression, purification, crystallization and crystallographic analysis.</title>
        <authorList>
            <person name="Wang X."/>
            <person name="Zhu P."/>
            <person name="Qu S."/>
            <person name="Zhao J."/>
            <person name="Singh P.K."/>
            <person name="Wang W."/>
        </authorList>
    </citation>
    <scope>CRYSTALLIZATION OF 26-241</scope>
    <scope>IDENTIFICATION BY MASS SPECTROMETRY</scope>
    <scope>SUBUNIT</scope>
</reference>
<keyword id="KW-0002">3D-structure</keyword>
<keyword id="KW-0965">Cell junction</keyword>
<keyword id="KW-1003">Cell membrane</keyword>
<keyword id="KW-1015">Disulfide bond</keyword>
<keyword id="KW-0945">Host-virus interaction</keyword>
<keyword id="KW-0472">Membrane</keyword>
<keyword id="KW-0611">Plant defense</keyword>
<keyword id="KW-1185">Reference proteome</keyword>
<keyword id="KW-0677">Repeat</keyword>
<keyword id="KW-0732">Signal</keyword>
<keyword id="KW-0812">Transmembrane</keyword>
<keyword id="KW-1133">Transmembrane helix</keyword>
<keyword id="KW-0813">Transport</keyword>
<name>PDLP5_ARATH</name>
<sequence>MIKTKTTSLLCFLLTAVILMNPSSSSPTDNYIYAVCSPAKFSPSSGYETNLNSLLSSFVTSTAQTRYANFTVPTGKPEPTVTVYGIYQCRGDLDPTACSTCVSSAVAQVGALCSNSYSGFLQMENCLIRYDNKSFLGVQDKTLILNKCGQPMEFNDQDALTKASDVIGSLGTGDGSYRTGGNGNVQGVAQCSGDLSTSQCQDCLSDAIGRLKSDCGMAQGGYVYLSKCYARFSVGGSHARQTPGPNFGHEGEKGNKDDNGVGKTLAIIIGIVTLIILLVVFLAFVGKCCRKLQDEKWCK</sequence>
<dbReference type="EMBL" id="EU214911">
    <property type="protein sequence ID" value="ABW84227.1"/>
    <property type="molecule type" value="mRNA"/>
</dbReference>
<dbReference type="EMBL" id="AC011663">
    <property type="protein sequence ID" value="AAG52335.1"/>
    <property type="status" value="ALT_SEQ"/>
    <property type="molecule type" value="Genomic_DNA"/>
</dbReference>
<dbReference type="EMBL" id="CP002684">
    <property type="protein sequence ID" value="AEE35100.1"/>
    <property type="molecule type" value="Genomic_DNA"/>
</dbReference>
<dbReference type="EMBL" id="BT002470">
    <property type="protein sequence ID" value="AAO00830.1"/>
    <property type="molecule type" value="mRNA"/>
</dbReference>
<dbReference type="EMBL" id="BT006325">
    <property type="protein sequence ID" value="AAP13433.1"/>
    <property type="molecule type" value="mRNA"/>
</dbReference>
<dbReference type="EMBL" id="AY088027">
    <property type="protein sequence ID" value="AAM65573.1"/>
    <property type="molecule type" value="mRNA"/>
</dbReference>
<dbReference type="PIR" id="C96731">
    <property type="entry name" value="C96731"/>
</dbReference>
<dbReference type="RefSeq" id="NP_564997.1">
    <property type="nucleotide sequence ID" value="NM_105737.4"/>
</dbReference>
<dbReference type="PDB" id="6GRE">
    <property type="method" value="X-ray"/>
    <property type="resolution" value="1.29 A"/>
    <property type="chains" value="A/B=26-241"/>
</dbReference>
<dbReference type="PDBsum" id="6GRE"/>
<dbReference type="SMR" id="Q8GUJ2"/>
<dbReference type="BioGRID" id="28626">
    <property type="interactions" value="1"/>
</dbReference>
<dbReference type="FunCoup" id="Q8GUJ2">
    <property type="interactions" value="3"/>
</dbReference>
<dbReference type="STRING" id="3702.Q8GUJ2"/>
<dbReference type="TCDB" id="1.I.2.1.1">
    <property type="family name" value="the plant plasmodesmata (ppd) family"/>
</dbReference>
<dbReference type="PaxDb" id="3702-AT1G70690.1"/>
<dbReference type="ProteomicsDB" id="224524"/>
<dbReference type="EnsemblPlants" id="AT1G70690.1">
    <property type="protein sequence ID" value="AT1G70690.1"/>
    <property type="gene ID" value="AT1G70690"/>
</dbReference>
<dbReference type="GeneID" id="843406"/>
<dbReference type="Gramene" id="AT1G70690.1">
    <property type="protein sequence ID" value="AT1G70690.1"/>
    <property type="gene ID" value="AT1G70690"/>
</dbReference>
<dbReference type="KEGG" id="ath:AT1G70690"/>
<dbReference type="Araport" id="AT1G70690"/>
<dbReference type="TAIR" id="AT1G70690">
    <property type="gene designation" value="HWI1"/>
</dbReference>
<dbReference type="eggNOG" id="ENOG502QWR4">
    <property type="taxonomic scope" value="Eukaryota"/>
</dbReference>
<dbReference type="HOGENOM" id="CLU_000288_33_0_1"/>
<dbReference type="InParanoid" id="Q8GUJ2"/>
<dbReference type="OMA" id="ANCSQAR"/>
<dbReference type="PhylomeDB" id="Q8GUJ2"/>
<dbReference type="PRO" id="PR:Q8GUJ2"/>
<dbReference type="Proteomes" id="UP000006548">
    <property type="component" value="Chromosome 1"/>
</dbReference>
<dbReference type="ExpressionAtlas" id="Q8GUJ2">
    <property type="expression patterns" value="baseline and differential"/>
</dbReference>
<dbReference type="GO" id="GO:0005886">
    <property type="term" value="C:plasma membrane"/>
    <property type="evidence" value="ECO:0007669"/>
    <property type="project" value="UniProtKB-SubCell"/>
</dbReference>
<dbReference type="GO" id="GO:0009506">
    <property type="term" value="C:plasmodesma"/>
    <property type="evidence" value="ECO:0000314"/>
    <property type="project" value="TAIR"/>
</dbReference>
<dbReference type="GO" id="GO:0042742">
    <property type="term" value="P:defense response to bacterium"/>
    <property type="evidence" value="ECO:0000270"/>
    <property type="project" value="TAIR"/>
</dbReference>
<dbReference type="GO" id="GO:0051707">
    <property type="term" value="P:response to other organism"/>
    <property type="evidence" value="ECO:0000270"/>
    <property type="project" value="TAIR"/>
</dbReference>
<dbReference type="CDD" id="cd23509">
    <property type="entry name" value="Gnk2-like"/>
    <property type="match status" value="2"/>
</dbReference>
<dbReference type="FunFam" id="3.30.430.20:FF:000001">
    <property type="entry name" value="cysteine-rich repeat secretory protein 3"/>
    <property type="match status" value="1"/>
</dbReference>
<dbReference type="FunFam" id="3.30.430.20:FF:000020">
    <property type="entry name" value="Cysteine-rich repeat secretory protein 60"/>
    <property type="match status" value="1"/>
</dbReference>
<dbReference type="Gene3D" id="3.30.430.20">
    <property type="entry name" value="Gnk2 domain, C-X8-C-X2-C motif"/>
    <property type="match status" value="2"/>
</dbReference>
<dbReference type="InterPro" id="IPR051378">
    <property type="entry name" value="Cell2Cell_Antifungal"/>
</dbReference>
<dbReference type="InterPro" id="IPR002902">
    <property type="entry name" value="GNK2"/>
</dbReference>
<dbReference type="InterPro" id="IPR038408">
    <property type="entry name" value="GNK2_sf"/>
</dbReference>
<dbReference type="PANTHER" id="PTHR32080">
    <property type="entry name" value="ANTIFUNGAL PROTEIN GINKBILOBIN-2-LIKE"/>
    <property type="match status" value="1"/>
</dbReference>
<dbReference type="PANTHER" id="PTHR32080:SF59">
    <property type="entry name" value="PLASMODESMATA-LOCATED PROTEIN 5"/>
    <property type="match status" value="1"/>
</dbReference>
<dbReference type="Pfam" id="PF01657">
    <property type="entry name" value="Stress-antifung"/>
    <property type="match status" value="2"/>
</dbReference>
<dbReference type="PROSITE" id="PS51473">
    <property type="entry name" value="GNK2"/>
    <property type="match status" value="2"/>
</dbReference>
<feature type="signal peptide" evidence="2">
    <location>
        <begin position="1"/>
        <end position="25"/>
    </location>
</feature>
<feature type="chain" id="PRO_0000296130" description="Plasmodesmata-located protein 5">
    <location>
        <begin position="26"/>
        <end position="299"/>
    </location>
</feature>
<feature type="topological domain" description="Extracellular" evidence="1">
    <location>
        <begin position="26"/>
        <end position="264"/>
    </location>
</feature>
<feature type="transmembrane region" description="Helical" evidence="2">
    <location>
        <begin position="265"/>
        <end position="285"/>
    </location>
</feature>
<feature type="topological domain" description="Cytoplasmic" evidence="1">
    <location>
        <begin position="286"/>
        <end position="299"/>
    </location>
</feature>
<feature type="domain" description="Gnk2-homologous 1" evidence="3">
    <location>
        <begin position="29"/>
        <end position="135"/>
    </location>
</feature>
<feature type="domain" description="Gnk2-homologous 2" evidence="3">
    <location>
        <begin position="137"/>
        <end position="237"/>
    </location>
</feature>
<feature type="region of interest" description="Necessary and sufficient for plasmodesmal targeting" evidence="1">
    <location>
        <begin position="265"/>
        <end position="285"/>
    </location>
</feature>
<feature type="disulfide bond" evidence="3">
    <location>
        <begin position="36"/>
        <end position="113"/>
    </location>
</feature>
<feature type="disulfide bond" evidence="3">
    <location>
        <begin position="89"/>
        <end position="98"/>
    </location>
</feature>
<feature type="disulfide bond" evidence="3">
    <location>
        <begin position="101"/>
        <end position="126"/>
    </location>
</feature>
<feature type="disulfide bond" evidence="3">
    <location>
        <begin position="148"/>
        <end position="215"/>
    </location>
</feature>
<feature type="disulfide bond" evidence="3">
    <location>
        <begin position="191"/>
        <end position="200"/>
    </location>
</feature>
<feature type="disulfide bond" evidence="3">
    <location>
        <begin position="203"/>
        <end position="228"/>
    </location>
</feature>
<feature type="sequence conflict" description="In Ref. 5; AAM65573." evidence="18" ref="5">
    <original>P</original>
    <variation>S</variation>
    <location>
        <position position="77"/>
    </location>
</feature>
<feature type="sequence conflict" description="In Ref. 5; AAM65573." evidence="18" ref="5">
    <original>IV</original>
    <variation>MI</variation>
    <location>
        <begin position="271"/>
        <end position="272"/>
    </location>
</feature>
<feature type="sequence conflict" description="In Ref. 5; AAM65573." evidence="18" ref="5">
    <original>L</original>
    <variation>F</variation>
    <location>
        <position position="292"/>
    </location>
</feature>
<feature type="strand" evidence="20">
    <location>
        <begin position="32"/>
        <end position="36"/>
    </location>
</feature>
<feature type="helix" evidence="20">
    <location>
        <begin position="46"/>
        <end position="61"/>
    </location>
</feature>
<feature type="turn" evidence="20">
    <location>
        <begin position="62"/>
        <end position="64"/>
    </location>
</feature>
<feature type="strand" evidence="20">
    <location>
        <begin position="66"/>
        <end position="76"/>
    </location>
</feature>
<feature type="turn" evidence="20">
    <location>
        <begin position="79"/>
        <end position="81"/>
    </location>
</feature>
<feature type="strand" evidence="20">
    <location>
        <begin position="83"/>
        <end position="89"/>
    </location>
</feature>
<feature type="helix" evidence="20">
    <location>
        <begin position="95"/>
        <end position="113"/>
    </location>
</feature>
<feature type="strand" evidence="20">
    <location>
        <begin position="119"/>
        <end position="122"/>
    </location>
</feature>
<feature type="strand" evidence="20">
    <location>
        <begin position="124"/>
        <end position="133"/>
    </location>
</feature>
<feature type="strand" evidence="20">
    <location>
        <begin position="143"/>
        <end position="148"/>
    </location>
</feature>
<feature type="helix" evidence="20">
    <location>
        <begin position="157"/>
        <end position="172"/>
    </location>
</feature>
<feature type="strand" evidence="20">
    <location>
        <begin position="175"/>
        <end position="182"/>
    </location>
</feature>
<feature type="strand" evidence="20">
    <location>
        <begin position="185"/>
        <end position="191"/>
    </location>
</feature>
<feature type="helix" evidence="20">
    <location>
        <begin position="197"/>
        <end position="215"/>
    </location>
</feature>
<feature type="strand" evidence="20">
    <location>
        <begin position="221"/>
        <end position="234"/>
    </location>
</feature>
<accession>Q8GUJ2</accession>
<accession>A8WAS5</accession>
<accession>Q8LA52</accession>
<accession>Q9CAB9</accession>
<gene>
    <name evidence="15" type="primary">PDLP5</name>
    <name evidence="13" type="synonym">CRRSP2</name>
    <name type="synonym">HWI1</name>
    <name type="ordered locus">At1g70690</name>
    <name type="ORF">F5A18.13</name>
</gene>
<proteinExistence type="evidence at protein level"/>
<evidence type="ECO:0000250" key="1">
    <source>
        <dbReference type="UniProtKB" id="Q8GXV7"/>
    </source>
</evidence>
<evidence type="ECO:0000255" key="2"/>
<evidence type="ECO:0000255" key="3">
    <source>
        <dbReference type="PROSITE-ProRule" id="PRU00806"/>
    </source>
</evidence>
<evidence type="ECO:0000269" key="4">
    <source>
    </source>
</evidence>
<evidence type="ECO:0000269" key="5">
    <source>
    </source>
</evidence>
<evidence type="ECO:0000269" key="6">
    <source>
    </source>
</evidence>
<evidence type="ECO:0000269" key="7">
    <source>
    </source>
</evidence>
<evidence type="ECO:0000269" key="8">
    <source>
    </source>
</evidence>
<evidence type="ECO:0000269" key="9">
    <source>
    </source>
</evidence>
<evidence type="ECO:0000269" key="10">
    <source>
    </source>
</evidence>
<evidence type="ECO:0000269" key="11">
    <source>
    </source>
</evidence>
<evidence type="ECO:0000269" key="12">
    <source>
    </source>
</evidence>
<evidence type="ECO:0000303" key="13">
    <source>
    </source>
</evidence>
<evidence type="ECO:0000303" key="14">
    <source>
    </source>
</evidence>
<evidence type="ECO:0000303" key="15">
    <source>
    </source>
</evidence>
<evidence type="ECO:0000303" key="16">
    <source>
    </source>
</evidence>
<evidence type="ECO:0000303" key="17">
    <source>
    </source>
</evidence>
<evidence type="ECO:0000305" key="18"/>
<evidence type="ECO:0000305" key="19">
    <source>
    </source>
</evidence>
<evidence type="ECO:0007829" key="20">
    <source>
        <dbReference type="PDB" id="6GRE"/>
    </source>
</evidence>
<comment type="function">
    <text evidence="9 10 11">Modulates cell-to-cell trafficking. Has a positive role in innate immunity. Required for systemic acquired resistance (SAR) which is mediated by the signaling molecules azelaic acid (AzA), glycerol-3-phosphate (G3P), and salicylic acid (SA) (PubMed:27078071). Negative regulator of plasmodesmata permeability triggered by SA during immune responses, through regulation of callose deposition (PubMed:21934146, PubMed:23749844). Delays the trafficking of Tobacco Mosaic Virus (TMV) movement protein (MP). Required for symplastic signal transport (PubMed:27078071).</text>
</comment>
<comment type="subunit">
    <text evidence="11 12">Monomer (PubMed:28876233). Interacts with PDLP1 (PubMed:27078071).</text>
</comment>
<comment type="subunit">
    <text evidence="19">(Microbial infection) Interacts with Grapevine fanleaf virus (GFLV) 2B-MP.</text>
</comment>
<comment type="subcellular location">
    <subcellularLocation>
        <location>Cell membrane</location>
        <topology evidence="1">Single-pass type I membrane protein</topology>
    </subcellularLocation>
    <subcellularLocation>
        <location evidence="5 8 9">Cell junction</location>
        <location evidence="5 8 9">Plasmodesma</location>
    </subcellularLocation>
    <text>Located in cell wall junctions between leaf epidermal and mesophyl cells. Located to the central region of plasmodesmata. Co-localizes with the Grapevine fanleaf virus (GFLV) 2B-MP at the base of tubules within modified plasmodesmata.</text>
</comment>
<comment type="tissue specificity">
    <text evidence="7 9">Highly expressed in inflorescence nodes and rosette senescent leaves. Mostly expressed in cell wall junctions between leaf epidermal and mesophyl cells, and to a lesser extent at the cross walls between epidermal or cortex cells within the hypocotyl (at protein level). Low vascular expression in seedling and mature leaf, but high expression in senescing leaves (at protein level).</text>
</comment>
<comment type="induction">
    <text evidence="4 6 9 10">By the Pseudomonas syringae pv. maculicola effector HopW1-1 (PubMed:16531493, PubMed:18266921). By salicylic acid (PubMed:21934146, PubMed:23749844).</text>
</comment>
<comment type="disruption phenotype">
    <text evidence="9 10 11">No growth defects (PubMed:21934146). Two-fold lower callose accumulation in plasmodesmata than wild type (PubMed:21934146). More susceptible to infection by the plant pathogen Pseudomonas syringae pv. maculicola (PubMed:21934146). Level of salicylic acid (SA) is comparable to wild type but plasmodesmata closure is impaired (PubMed:21934146, PubMed:23749844). However, overexpression leads to growth inhibition and chlorosis in seedling stage, with levels of SA fifteen-fold higher than wild type including all forms of SA, and probably triggering cell death (PubMed:23749844). Ectopic expression affects trafficking of MP from TMV, and shows four-fold accumulation of callose in plasmodesmata than wild type (PubMed:21934146). Compromised systemic acquired resistance (SAR) (PubMed:27078071).</text>
</comment>
<comment type="similarity">
    <text evidence="18">Belongs to the cysteine-rich repeat secretory protein family. Plasmodesmata-located proteins (PDLD) subfamily.</text>
</comment>
<comment type="caution">
    <text evidence="18">PDLPs were initially named Cysteine-rich secretory proteins based on a classification work that failed to predict the transmembrane region at the C-terminus (PubMed:11402176). However, it was later shown that PDLPs are membrane proteins.</text>
</comment>
<comment type="sequence caution" evidence="18">
    <conflict type="erroneous gene model prediction">
        <sequence resource="EMBL-CDS" id="AAG52335"/>
    </conflict>
</comment>